<dbReference type="EC" id="2.7.1.50" evidence="1"/>
<dbReference type="EMBL" id="CP000802">
    <property type="protein sequence ID" value="ABV06523.1"/>
    <property type="molecule type" value="Genomic_DNA"/>
</dbReference>
<dbReference type="RefSeq" id="WP_001195564.1">
    <property type="nucleotide sequence ID" value="NC_009800.1"/>
</dbReference>
<dbReference type="SMR" id="A8A1W9"/>
<dbReference type="KEGG" id="ecx:EcHS_A2240"/>
<dbReference type="HOGENOM" id="CLU_019943_0_1_6"/>
<dbReference type="UniPathway" id="UPA00060">
    <property type="reaction ID" value="UER00139"/>
</dbReference>
<dbReference type="GO" id="GO:0005524">
    <property type="term" value="F:ATP binding"/>
    <property type="evidence" value="ECO:0007669"/>
    <property type="project" value="UniProtKB-UniRule"/>
</dbReference>
<dbReference type="GO" id="GO:0004417">
    <property type="term" value="F:hydroxyethylthiazole kinase activity"/>
    <property type="evidence" value="ECO:0007669"/>
    <property type="project" value="UniProtKB-UniRule"/>
</dbReference>
<dbReference type="GO" id="GO:0000287">
    <property type="term" value="F:magnesium ion binding"/>
    <property type="evidence" value="ECO:0007669"/>
    <property type="project" value="UniProtKB-UniRule"/>
</dbReference>
<dbReference type="GO" id="GO:0009228">
    <property type="term" value="P:thiamine biosynthetic process"/>
    <property type="evidence" value="ECO:0007669"/>
    <property type="project" value="UniProtKB-KW"/>
</dbReference>
<dbReference type="GO" id="GO:0009229">
    <property type="term" value="P:thiamine diphosphate biosynthetic process"/>
    <property type="evidence" value="ECO:0007669"/>
    <property type="project" value="UniProtKB-UniRule"/>
</dbReference>
<dbReference type="CDD" id="cd01170">
    <property type="entry name" value="THZ_kinase"/>
    <property type="match status" value="1"/>
</dbReference>
<dbReference type="FunFam" id="3.40.1190.20:FF:000015">
    <property type="entry name" value="Hydroxyethylthiazole kinase"/>
    <property type="match status" value="1"/>
</dbReference>
<dbReference type="Gene3D" id="3.40.1190.20">
    <property type="match status" value="1"/>
</dbReference>
<dbReference type="HAMAP" id="MF_00228">
    <property type="entry name" value="Thz_kinase"/>
    <property type="match status" value="1"/>
</dbReference>
<dbReference type="InterPro" id="IPR000417">
    <property type="entry name" value="Hyethyz_kinase"/>
</dbReference>
<dbReference type="InterPro" id="IPR029056">
    <property type="entry name" value="Ribokinase-like"/>
</dbReference>
<dbReference type="NCBIfam" id="NF006830">
    <property type="entry name" value="PRK09355.1"/>
    <property type="match status" value="1"/>
</dbReference>
<dbReference type="NCBIfam" id="TIGR00694">
    <property type="entry name" value="thiM"/>
    <property type="match status" value="1"/>
</dbReference>
<dbReference type="Pfam" id="PF02110">
    <property type="entry name" value="HK"/>
    <property type="match status" value="1"/>
</dbReference>
<dbReference type="PIRSF" id="PIRSF000513">
    <property type="entry name" value="Thz_kinase"/>
    <property type="match status" value="1"/>
</dbReference>
<dbReference type="PRINTS" id="PR01099">
    <property type="entry name" value="HYETHTZKNASE"/>
</dbReference>
<dbReference type="SUPFAM" id="SSF53613">
    <property type="entry name" value="Ribokinase-like"/>
    <property type="match status" value="1"/>
</dbReference>
<proteinExistence type="inferred from homology"/>
<protein>
    <recommendedName>
        <fullName evidence="1">Hydroxyethylthiazole kinase</fullName>
        <ecNumber evidence="1">2.7.1.50</ecNumber>
    </recommendedName>
    <alternativeName>
        <fullName evidence="1">4-methyl-5-beta-hydroxyethylthiazole kinase</fullName>
        <shortName evidence="1">TH kinase</shortName>
        <shortName evidence="1">Thz kinase</shortName>
    </alternativeName>
</protein>
<feature type="chain" id="PRO_1000058759" description="Hydroxyethylthiazole kinase">
    <location>
        <begin position="1"/>
        <end position="262"/>
    </location>
</feature>
<feature type="binding site" evidence="1">
    <location>
        <position position="50"/>
    </location>
    <ligand>
        <name>substrate</name>
    </ligand>
</feature>
<feature type="binding site" evidence="1">
    <location>
        <position position="125"/>
    </location>
    <ligand>
        <name>ATP</name>
        <dbReference type="ChEBI" id="CHEBI:30616"/>
    </ligand>
</feature>
<feature type="binding site" evidence="1">
    <location>
        <position position="171"/>
    </location>
    <ligand>
        <name>ATP</name>
        <dbReference type="ChEBI" id="CHEBI:30616"/>
    </ligand>
</feature>
<feature type="binding site" evidence="1">
    <location>
        <position position="198"/>
    </location>
    <ligand>
        <name>substrate</name>
    </ligand>
</feature>
<comment type="function">
    <text evidence="1">Catalyzes the phosphorylation of the hydroxyl group of 4-methyl-5-beta-hydroxyethylthiazole (THZ).</text>
</comment>
<comment type="catalytic activity">
    <reaction evidence="1">
        <text>5-(2-hydroxyethyl)-4-methylthiazole + ATP = 4-methyl-5-(2-phosphooxyethyl)-thiazole + ADP + H(+)</text>
        <dbReference type="Rhea" id="RHEA:24212"/>
        <dbReference type="ChEBI" id="CHEBI:15378"/>
        <dbReference type="ChEBI" id="CHEBI:17957"/>
        <dbReference type="ChEBI" id="CHEBI:30616"/>
        <dbReference type="ChEBI" id="CHEBI:58296"/>
        <dbReference type="ChEBI" id="CHEBI:456216"/>
        <dbReference type="EC" id="2.7.1.50"/>
    </reaction>
</comment>
<comment type="cofactor">
    <cofactor evidence="1">
        <name>Mg(2+)</name>
        <dbReference type="ChEBI" id="CHEBI:18420"/>
    </cofactor>
</comment>
<comment type="pathway">
    <text evidence="1">Cofactor biosynthesis; thiamine diphosphate biosynthesis; 4-methyl-5-(2-phosphoethyl)-thiazole from 5-(2-hydroxyethyl)-4-methylthiazole: step 1/1.</text>
</comment>
<comment type="similarity">
    <text evidence="1">Belongs to the Thz kinase family.</text>
</comment>
<organism>
    <name type="scientific">Escherichia coli O9:H4 (strain HS)</name>
    <dbReference type="NCBI Taxonomy" id="331112"/>
    <lineage>
        <taxon>Bacteria</taxon>
        <taxon>Pseudomonadati</taxon>
        <taxon>Pseudomonadota</taxon>
        <taxon>Gammaproteobacteria</taxon>
        <taxon>Enterobacterales</taxon>
        <taxon>Enterobacteriaceae</taxon>
        <taxon>Escherichia</taxon>
    </lineage>
</organism>
<keyword id="KW-0067">ATP-binding</keyword>
<keyword id="KW-0418">Kinase</keyword>
<keyword id="KW-0460">Magnesium</keyword>
<keyword id="KW-0479">Metal-binding</keyword>
<keyword id="KW-0547">Nucleotide-binding</keyword>
<keyword id="KW-0784">Thiamine biosynthesis</keyword>
<keyword id="KW-0808">Transferase</keyword>
<sequence>MQVDLLGSAQSAHALHLFHQHSPLVHCMTNDVVQTFTANTLLALGASPAMVIETEEASQFAAIASALLINVGTLTQPRAQAMRAAVEQAKSSQTPWTLDPVAVGALDYRRHFCHELLSFKPAAIRGNASEIMALAGIANGGRGVDTTDAAANAIPAAQTLARETGAIVVVTGEMDYVTDGHRIIGIHGGDPLMTKVVGTGCALSAVVAACCALPGDTLENVASACHWMKQAGERAVARSEGPGSFVPHFLDALWQLTQEVQA</sequence>
<evidence type="ECO:0000255" key="1">
    <source>
        <dbReference type="HAMAP-Rule" id="MF_00228"/>
    </source>
</evidence>
<accession>A8A1W9</accession>
<reference key="1">
    <citation type="journal article" date="2008" name="J. Bacteriol.">
        <title>The pangenome structure of Escherichia coli: comparative genomic analysis of E. coli commensal and pathogenic isolates.</title>
        <authorList>
            <person name="Rasko D.A."/>
            <person name="Rosovitz M.J."/>
            <person name="Myers G.S.A."/>
            <person name="Mongodin E.F."/>
            <person name="Fricke W.F."/>
            <person name="Gajer P."/>
            <person name="Crabtree J."/>
            <person name="Sebaihia M."/>
            <person name="Thomson N.R."/>
            <person name="Chaudhuri R."/>
            <person name="Henderson I.R."/>
            <person name="Sperandio V."/>
            <person name="Ravel J."/>
        </authorList>
    </citation>
    <scope>NUCLEOTIDE SEQUENCE [LARGE SCALE GENOMIC DNA]</scope>
    <source>
        <strain>HS</strain>
    </source>
</reference>
<gene>
    <name evidence="1" type="primary">thiM</name>
    <name type="ordered locus">EcHS_A2240</name>
</gene>
<name>THIM_ECOHS</name>